<geneLocation type="plasmid">
    <name>pSymA</name>
    <name>megaplasmid 1</name>
</geneLocation>
<dbReference type="EC" id="1.8.4.12"/>
<dbReference type="EMBL" id="AE006469">
    <property type="protein sequence ID" value="AAK65700.1"/>
    <property type="molecule type" value="Genomic_DNA"/>
</dbReference>
<dbReference type="PIR" id="B95392">
    <property type="entry name" value="B95392"/>
</dbReference>
<dbReference type="RefSeq" id="NP_436288.1">
    <property type="nucleotide sequence ID" value="NC_003037.1"/>
</dbReference>
<dbReference type="SMR" id="Q92Y46"/>
<dbReference type="EnsemblBacteria" id="AAK65700">
    <property type="protein sequence ID" value="AAK65700"/>
    <property type="gene ID" value="SMa1894"/>
</dbReference>
<dbReference type="KEGG" id="sme:SMa1894"/>
<dbReference type="PATRIC" id="fig|266834.11.peg.1078"/>
<dbReference type="HOGENOM" id="CLU_031040_8_5_5"/>
<dbReference type="OrthoDB" id="9785497at2"/>
<dbReference type="Proteomes" id="UP000001976">
    <property type="component" value="Plasmid pSymA"/>
</dbReference>
<dbReference type="GO" id="GO:0005737">
    <property type="term" value="C:cytoplasm"/>
    <property type="evidence" value="ECO:0007669"/>
    <property type="project" value="TreeGrafter"/>
</dbReference>
<dbReference type="GO" id="GO:0033743">
    <property type="term" value="F:peptide-methionine (R)-S-oxide reductase activity"/>
    <property type="evidence" value="ECO:0007669"/>
    <property type="project" value="UniProtKB-UniRule"/>
</dbReference>
<dbReference type="GO" id="GO:0030091">
    <property type="term" value="P:protein repair"/>
    <property type="evidence" value="ECO:0007669"/>
    <property type="project" value="InterPro"/>
</dbReference>
<dbReference type="GO" id="GO:0006979">
    <property type="term" value="P:response to oxidative stress"/>
    <property type="evidence" value="ECO:0007669"/>
    <property type="project" value="InterPro"/>
</dbReference>
<dbReference type="FunFam" id="2.170.150.20:FF:000003">
    <property type="entry name" value="Peptide methionine sulfoxide reductase MsrB"/>
    <property type="match status" value="1"/>
</dbReference>
<dbReference type="Gene3D" id="2.170.150.20">
    <property type="entry name" value="Peptide methionine sulfoxide reductase"/>
    <property type="match status" value="1"/>
</dbReference>
<dbReference type="HAMAP" id="MF_01400">
    <property type="entry name" value="MsrB"/>
    <property type="match status" value="1"/>
</dbReference>
<dbReference type="InterPro" id="IPR028427">
    <property type="entry name" value="Met_Sox_Rdtase_MsrB"/>
</dbReference>
<dbReference type="InterPro" id="IPR002579">
    <property type="entry name" value="Met_Sox_Rdtase_MsrB_dom"/>
</dbReference>
<dbReference type="InterPro" id="IPR011057">
    <property type="entry name" value="Mss4-like_sf"/>
</dbReference>
<dbReference type="NCBIfam" id="TIGR00357">
    <property type="entry name" value="peptide-methionine (R)-S-oxide reductase MsrB"/>
    <property type="match status" value="1"/>
</dbReference>
<dbReference type="PANTHER" id="PTHR10173">
    <property type="entry name" value="METHIONINE SULFOXIDE REDUCTASE"/>
    <property type="match status" value="1"/>
</dbReference>
<dbReference type="PANTHER" id="PTHR10173:SF59">
    <property type="entry name" value="PEPTIDE METHIONINE SULFOXIDE REDUCTASE MSRA_MSRB"/>
    <property type="match status" value="1"/>
</dbReference>
<dbReference type="Pfam" id="PF01641">
    <property type="entry name" value="SelR"/>
    <property type="match status" value="1"/>
</dbReference>
<dbReference type="SUPFAM" id="SSF51316">
    <property type="entry name" value="Mss4-like"/>
    <property type="match status" value="1"/>
</dbReference>
<dbReference type="PROSITE" id="PS51790">
    <property type="entry name" value="MSRB"/>
    <property type="match status" value="1"/>
</dbReference>
<accession>Q92Y46</accession>
<proteinExistence type="inferred from homology"/>
<sequence length="147" mass="16534">MTYRKTDEEVSKLTPEQYRVTQQNGTERPFTGEYTDNKRPGIYVDIVSGEPLFASADKFDSGCGWPSFTKPIVPANVNELRDNSHGMIRTEVRSAHGDSHLGHVFPDGPQDRGGLRYCINSAALRFIPREEMEAEGYGGYFNQVEDI</sequence>
<comment type="catalytic activity">
    <reaction>
        <text>L-methionyl-[protein] + [thioredoxin]-disulfide + H2O = L-methionyl-(R)-S-oxide-[protein] + [thioredoxin]-dithiol</text>
        <dbReference type="Rhea" id="RHEA:24164"/>
        <dbReference type="Rhea" id="RHEA-COMP:10698"/>
        <dbReference type="Rhea" id="RHEA-COMP:10700"/>
        <dbReference type="Rhea" id="RHEA-COMP:12313"/>
        <dbReference type="Rhea" id="RHEA-COMP:12314"/>
        <dbReference type="ChEBI" id="CHEBI:15377"/>
        <dbReference type="ChEBI" id="CHEBI:16044"/>
        <dbReference type="ChEBI" id="CHEBI:29950"/>
        <dbReference type="ChEBI" id="CHEBI:45764"/>
        <dbReference type="ChEBI" id="CHEBI:50058"/>
        <dbReference type="EC" id="1.8.4.12"/>
    </reaction>
</comment>
<comment type="similarity">
    <text evidence="2">Belongs to the MsrB Met sulfoxide reductase family.</text>
</comment>
<keyword id="KW-0560">Oxidoreductase</keyword>
<keyword id="KW-0614">Plasmid</keyword>
<keyword id="KW-1185">Reference proteome</keyword>
<feature type="chain" id="PRO_0000140291" description="Peptide methionine sulfoxide reductase MsrB 2">
    <location>
        <begin position="1"/>
        <end position="147"/>
    </location>
</feature>
<feature type="domain" description="MsrB" evidence="1">
    <location>
        <begin position="6"/>
        <end position="129"/>
    </location>
</feature>
<feature type="active site" description="Nucleophile" evidence="1">
    <location>
        <position position="118"/>
    </location>
</feature>
<reference key="1">
    <citation type="journal article" date="2001" name="Proc. Natl. Acad. Sci. U.S.A.">
        <title>Nucleotide sequence and predicted functions of the entire Sinorhizobium meliloti pSymA megaplasmid.</title>
        <authorList>
            <person name="Barnett M.J."/>
            <person name="Fisher R.F."/>
            <person name="Jones T."/>
            <person name="Komp C."/>
            <person name="Abola A.P."/>
            <person name="Barloy-Hubler F."/>
            <person name="Bowser L."/>
            <person name="Capela D."/>
            <person name="Galibert F."/>
            <person name="Gouzy J."/>
            <person name="Gurjal M."/>
            <person name="Hong A."/>
            <person name="Huizar L."/>
            <person name="Hyman R.W."/>
            <person name="Kahn D."/>
            <person name="Kahn M.L."/>
            <person name="Kalman S."/>
            <person name="Keating D.H."/>
            <person name="Palm C."/>
            <person name="Peck M.C."/>
            <person name="Surzycki R."/>
            <person name="Wells D.H."/>
            <person name="Yeh K.-C."/>
            <person name="Davis R.W."/>
            <person name="Federspiel N.A."/>
            <person name="Long S.R."/>
        </authorList>
    </citation>
    <scope>NUCLEOTIDE SEQUENCE [LARGE SCALE GENOMIC DNA]</scope>
    <source>
        <strain>1021</strain>
    </source>
</reference>
<reference key="2">
    <citation type="journal article" date="2001" name="Science">
        <title>The composite genome of the legume symbiont Sinorhizobium meliloti.</title>
        <authorList>
            <person name="Galibert F."/>
            <person name="Finan T.M."/>
            <person name="Long S.R."/>
            <person name="Puehler A."/>
            <person name="Abola P."/>
            <person name="Ampe F."/>
            <person name="Barloy-Hubler F."/>
            <person name="Barnett M.J."/>
            <person name="Becker A."/>
            <person name="Boistard P."/>
            <person name="Bothe G."/>
            <person name="Boutry M."/>
            <person name="Bowser L."/>
            <person name="Buhrmester J."/>
            <person name="Cadieu E."/>
            <person name="Capela D."/>
            <person name="Chain P."/>
            <person name="Cowie A."/>
            <person name="Davis R.W."/>
            <person name="Dreano S."/>
            <person name="Federspiel N.A."/>
            <person name="Fisher R.F."/>
            <person name="Gloux S."/>
            <person name="Godrie T."/>
            <person name="Goffeau A."/>
            <person name="Golding B."/>
            <person name="Gouzy J."/>
            <person name="Gurjal M."/>
            <person name="Hernandez-Lucas I."/>
            <person name="Hong A."/>
            <person name="Huizar L."/>
            <person name="Hyman R.W."/>
            <person name="Jones T."/>
            <person name="Kahn D."/>
            <person name="Kahn M.L."/>
            <person name="Kalman S."/>
            <person name="Keating D.H."/>
            <person name="Kiss E."/>
            <person name="Komp C."/>
            <person name="Lelaure V."/>
            <person name="Masuy D."/>
            <person name="Palm C."/>
            <person name="Peck M.C."/>
            <person name="Pohl T.M."/>
            <person name="Portetelle D."/>
            <person name="Purnelle B."/>
            <person name="Ramsperger U."/>
            <person name="Surzycki R."/>
            <person name="Thebault P."/>
            <person name="Vandenbol M."/>
            <person name="Vorhoelter F.J."/>
            <person name="Weidner S."/>
            <person name="Wells D.H."/>
            <person name="Wong K."/>
            <person name="Yeh K.-C."/>
            <person name="Batut J."/>
        </authorList>
    </citation>
    <scope>NUCLEOTIDE SEQUENCE [LARGE SCALE GENOMIC DNA]</scope>
    <source>
        <strain>1021</strain>
    </source>
</reference>
<protein>
    <recommendedName>
        <fullName>Peptide methionine sulfoxide reductase MsrB 2</fullName>
        <ecNumber>1.8.4.12</ecNumber>
    </recommendedName>
    <alternativeName>
        <fullName>Peptide-methionine (R)-S-oxide reductase 2</fullName>
    </alternativeName>
</protein>
<gene>
    <name type="primary">msrB2</name>
    <name type="ordered locus">RA1042</name>
    <name type="ORF">SMa1894</name>
</gene>
<name>MSRB2_RHIME</name>
<organism>
    <name type="scientific">Rhizobium meliloti (strain 1021)</name>
    <name type="common">Ensifer meliloti</name>
    <name type="synonym">Sinorhizobium meliloti</name>
    <dbReference type="NCBI Taxonomy" id="266834"/>
    <lineage>
        <taxon>Bacteria</taxon>
        <taxon>Pseudomonadati</taxon>
        <taxon>Pseudomonadota</taxon>
        <taxon>Alphaproteobacteria</taxon>
        <taxon>Hyphomicrobiales</taxon>
        <taxon>Rhizobiaceae</taxon>
        <taxon>Sinorhizobium/Ensifer group</taxon>
        <taxon>Sinorhizobium</taxon>
    </lineage>
</organism>
<evidence type="ECO:0000255" key="1">
    <source>
        <dbReference type="PROSITE-ProRule" id="PRU01126"/>
    </source>
</evidence>
<evidence type="ECO:0000305" key="2"/>